<gene>
    <name evidence="1" type="primary">hypA</name>
    <name type="ordered locus">TGAM_0233</name>
</gene>
<proteinExistence type="inferred from homology"/>
<comment type="function">
    <text evidence="1">Involved in the maturation of [NiFe] hydrogenases. Required for nickel insertion into the metal center of the hydrogenase.</text>
</comment>
<comment type="similarity">
    <text evidence="1">Belongs to the HypA/HybF family.</text>
</comment>
<evidence type="ECO:0000255" key="1">
    <source>
        <dbReference type="HAMAP-Rule" id="MF_00213"/>
    </source>
</evidence>
<name>HYPA_THEGJ</name>
<keyword id="KW-0479">Metal-binding</keyword>
<keyword id="KW-0533">Nickel</keyword>
<keyword id="KW-1185">Reference proteome</keyword>
<keyword id="KW-0862">Zinc</keyword>
<dbReference type="EMBL" id="CP001398">
    <property type="protein sequence ID" value="ACS32735.1"/>
    <property type="molecule type" value="Genomic_DNA"/>
</dbReference>
<dbReference type="RefSeq" id="WP_015857854.1">
    <property type="nucleotide sequence ID" value="NC_012804.1"/>
</dbReference>
<dbReference type="SMR" id="C5A3C3"/>
<dbReference type="STRING" id="593117.TGAM_0233"/>
<dbReference type="PaxDb" id="593117-TGAM_0233"/>
<dbReference type="GeneID" id="7988808"/>
<dbReference type="KEGG" id="tga:TGAM_0233"/>
<dbReference type="PATRIC" id="fig|593117.10.peg.236"/>
<dbReference type="eggNOG" id="arCOG04426">
    <property type="taxonomic scope" value="Archaea"/>
</dbReference>
<dbReference type="HOGENOM" id="CLU_126929_2_0_2"/>
<dbReference type="OrthoDB" id="36835at2157"/>
<dbReference type="Proteomes" id="UP000001488">
    <property type="component" value="Chromosome"/>
</dbReference>
<dbReference type="GO" id="GO:0016151">
    <property type="term" value="F:nickel cation binding"/>
    <property type="evidence" value="ECO:0007669"/>
    <property type="project" value="UniProtKB-UniRule"/>
</dbReference>
<dbReference type="GO" id="GO:0008270">
    <property type="term" value="F:zinc ion binding"/>
    <property type="evidence" value="ECO:0007669"/>
    <property type="project" value="UniProtKB-UniRule"/>
</dbReference>
<dbReference type="GO" id="GO:0051604">
    <property type="term" value="P:protein maturation"/>
    <property type="evidence" value="ECO:0007669"/>
    <property type="project" value="InterPro"/>
</dbReference>
<dbReference type="GO" id="GO:0036211">
    <property type="term" value="P:protein modification process"/>
    <property type="evidence" value="ECO:0007669"/>
    <property type="project" value="UniProtKB-UniRule"/>
</dbReference>
<dbReference type="FunFam" id="3.30.2320.80:FF:000004">
    <property type="entry name" value="Hydrogenase maturation factor HypA"/>
    <property type="match status" value="1"/>
</dbReference>
<dbReference type="Gene3D" id="3.30.2320.80">
    <property type="match status" value="1"/>
</dbReference>
<dbReference type="HAMAP" id="MF_00213">
    <property type="entry name" value="HypA_HybF"/>
    <property type="match status" value="1"/>
</dbReference>
<dbReference type="InterPro" id="IPR020538">
    <property type="entry name" value="Hydgase_Ni_incorp_HypA/HybF_CS"/>
</dbReference>
<dbReference type="InterPro" id="IPR000688">
    <property type="entry name" value="HypA/HybF"/>
</dbReference>
<dbReference type="NCBIfam" id="NF003008">
    <property type="entry name" value="PRK03824.1"/>
    <property type="match status" value="1"/>
</dbReference>
<dbReference type="PANTHER" id="PTHR34535">
    <property type="entry name" value="HYDROGENASE MATURATION FACTOR HYPA"/>
    <property type="match status" value="1"/>
</dbReference>
<dbReference type="PANTHER" id="PTHR34535:SF3">
    <property type="entry name" value="HYDROGENASE MATURATION FACTOR HYPA"/>
    <property type="match status" value="1"/>
</dbReference>
<dbReference type="Pfam" id="PF01155">
    <property type="entry name" value="HypA"/>
    <property type="match status" value="1"/>
</dbReference>
<dbReference type="PIRSF" id="PIRSF004761">
    <property type="entry name" value="Hydrgn_mat_HypA"/>
    <property type="match status" value="1"/>
</dbReference>
<dbReference type="PROSITE" id="PS01249">
    <property type="entry name" value="HYPA"/>
    <property type="match status" value="1"/>
</dbReference>
<protein>
    <recommendedName>
        <fullName evidence="1">Hydrogenase maturation factor HypA</fullName>
    </recommendedName>
</protein>
<accession>C5A3C3</accession>
<sequence>MHEWALADAIVRTVLDYAQREGAKRVKAVRVVLGELQDVAEDIVKFAMEQMFAGTIAEGAEIIFEEEEAVFKCRNCGHTWKLKEVKDRFDERIKEDIHFIPEVVHAFLACPKCGSHDFEVVQGRGVYVAGIMIEKEGEA</sequence>
<organism>
    <name type="scientific">Thermococcus gammatolerans (strain DSM 15229 / JCM 11827 / EJ3)</name>
    <dbReference type="NCBI Taxonomy" id="593117"/>
    <lineage>
        <taxon>Archaea</taxon>
        <taxon>Methanobacteriati</taxon>
        <taxon>Methanobacteriota</taxon>
        <taxon>Thermococci</taxon>
        <taxon>Thermococcales</taxon>
        <taxon>Thermococcaceae</taxon>
        <taxon>Thermococcus</taxon>
    </lineage>
</organism>
<feature type="chain" id="PRO_1000204208" description="Hydrogenase maturation factor HypA">
    <location>
        <begin position="1"/>
        <end position="139"/>
    </location>
</feature>
<feature type="binding site" evidence="1">
    <location>
        <position position="2"/>
    </location>
    <ligand>
        <name>Ni(2+)</name>
        <dbReference type="ChEBI" id="CHEBI:49786"/>
    </ligand>
</feature>
<feature type="binding site" evidence="1">
    <location>
        <position position="73"/>
    </location>
    <ligand>
        <name>Zn(2+)</name>
        <dbReference type="ChEBI" id="CHEBI:29105"/>
    </ligand>
</feature>
<feature type="binding site" evidence="1">
    <location>
        <position position="76"/>
    </location>
    <ligand>
        <name>Zn(2+)</name>
        <dbReference type="ChEBI" id="CHEBI:29105"/>
    </ligand>
</feature>
<feature type="binding site" evidence="1">
    <location>
        <position position="110"/>
    </location>
    <ligand>
        <name>Zn(2+)</name>
        <dbReference type="ChEBI" id="CHEBI:29105"/>
    </ligand>
</feature>
<feature type="binding site" evidence="1">
    <location>
        <position position="113"/>
    </location>
    <ligand>
        <name>Zn(2+)</name>
        <dbReference type="ChEBI" id="CHEBI:29105"/>
    </ligand>
</feature>
<reference key="1">
    <citation type="journal article" date="2007" name="Genome Biol.">
        <title>Genome analysis and genome-wide proteomics of Thermococcus gammatolerans, the most radioresistant organism known amongst the Archaea.</title>
        <authorList>
            <person name="Zivanovic Y."/>
            <person name="Armengaud J."/>
            <person name="Lagorce A."/>
            <person name="Leplat C."/>
            <person name="Guerin P."/>
            <person name="Dutertre M."/>
            <person name="Anthouard V."/>
            <person name="Forterre P."/>
            <person name="Wincker P."/>
            <person name="Confalonieri F."/>
        </authorList>
    </citation>
    <scope>NUCLEOTIDE SEQUENCE [LARGE SCALE GENOMIC DNA]</scope>
    <source>
        <strain>DSM 15229 / JCM 11827 / EJ3</strain>
    </source>
</reference>